<organism>
    <name type="scientific">Penicillium terrestre</name>
    <dbReference type="NCBI Taxonomy" id="374132"/>
    <lineage>
        <taxon>Eukaryota</taxon>
        <taxon>Fungi</taxon>
        <taxon>Dikarya</taxon>
        <taxon>Ascomycota</taxon>
        <taxon>Pezizomycotina</taxon>
        <taxon>Eurotiomycetes</taxon>
        <taxon>Eurotiomycetidae</taxon>
        <taxon>Eurotiales</taxon>
        <taxon>Aspergillaceae</taxon>
        <taxon>Penicillium</taxon>
    </lineage>
</organism>
<evidence type="ECO:0000250" key="1">
    <source>
        <dbReference type="UniProtKB" id="G3Y418"/>
    </source>
</evidence>
<evidence type="ECO:0000250" key="2">
    <source>
        <dbReference type="UniProtKB" id="P32378"/>
    </source>
</evidence>
<evidence type="ECO:0000255" key="3"/>
<evidence type="ECO:0000269" key="4">
    <source>
    </source>
</evidence>
<evidence type="ECO:0000303" key="5">
    <source>
    </source>
</evidence>
<evidence type="ECO:0000305" key="6"/>
<reference key="1">
    <citation type="journal article" date="2017" name="Org. Lett.">
        <title>Late-stage terpene cyclization by an integral membrane cyclase in the biosynthesis of isoprenoid epoxycyclohexenone natural products.</title>
        <authorList>
            <person name="Tang M.C."/>
            <person name="Cui X."/>
            <person name="He X."/>
            <person name="Ding Z."/>
            <person name="Zhu T."/>
            <person name="Tang Y."/>
            <person name="Li D."/>
        </authorList>
    </citation>
    <scope>NUCLEOTIDE SEQUENCE [GENOMIC DNA]</scope>
    <scope>FUNCTION</scope>
    <scope>PATHWAY</scope>
    <source>
        <strain>LM2</strain>
    </source>
</reference>
<name>MACG_PENTR</name>
<accession>A0A2P1DP87</accession>
<keyword id="KW-0460">Magnesium</keyword>
<keyword id="KW-0472">Membrane</keyword>
<keyword id="KW-0808">Transferase</keyword>
<keyword id="KW-0812">Transmembrane</keyword>
<keyword id="KW-1133">Transmembrane helix</keyword>
<feature type="chain" id="PRO_0000454091" description="Polyprenyl transferase macG">
    <location>
        <begin position="1"/>
        <end position="319"/>
    </location>
</feature>
<feature type="transmembrane region" description="Helical" evidence="3">
    <location>
        <begin position="28"/>
        <end position="45"/>
    </location>
</feature>
<feature type="transmembrane region" description="Helical" evidence="3">
    <location>
        <begin position="48"/>
        <end position="68"/>
    </location>
</feature>
<feature type="transmembrane region" description="Helical" evidence="3">
    <location>
        <begin position="106"/>
        <end position="126"/>
    </location>
</feature>
<feature type="transmembrane region" description="Helical" evidence="3">
    <location>
        <begin position="127"/>
        <end position="147"/>
    </location>
</feature>
<feature type="transmembrane region" description="Helical" evidence="3">
    <location>
        <begin position="152"/>
        <end position="172"/>
    </location>
</feature>
<feature type="transmembrane region" description="Helical" evidence="3">
    <location>
        <begin position="182"/>
        <end position="202"/>
    </location>
</feature>
<feature type="transmembrane region" description="Helical" evidence="3">
    <location>
        <begin position="224"/>
        <end position="244"/>
    </location>
</feature>
<feature type="transmembrane region" description="Helical" evidence="3">
    <location>
        <begin position="249"/>
        <end position="269"/>
    </location>
</feature>
<feature type="transmembrane region" description="Helical" evidence="3">
    <location>
        <begin position="289"/>
        <end position="309"/>
    </location>
</feature>
<sequence>MTVSTTPKSQRNVARGVWELARLHTREAWLCWYPAIWGACVAAGMRDVSLELAPFLRLLFGIWASVTATHCAFCTFNDICDQKLDKHVERCKIRPLPSGMISTSEAVVAFICWLPVTLAITWGTLGPAVMAGFIPVWVLSTIYPFMKRIMPFPQVVLGAIIGGAVFPGWVGITGDLKDLDQALPLFFATASWVVYFDVFYATQDRPDDEKIGVKSLAVLLGKNVQILLAVLGALQVLLFAVTALRADMSLIFWVLGLGVWMVNVPWHILSLDLKDRHSGGRIFKSNIKLGLYLTGVSLLELFVVRVYDISLANMKMELH</sequence>
<proteinExistence type="inferred from homology"/>
<protein>
    <recommendedName>
        <fullName evidence="5">Polyprenyl transferase macG</fullName>
        <ecNumber evidence="1">2.5.1.-</ecNumber>
    </recommendedName>
    <alternativeName>
        <fullName evidence="5">Macrophorins biosynthesis cluster protein G</fullName>
    </alternativeName>
</protein>
<gene>
    <name evidence="5" type="primary">macG</name>
</gene>
<comment type="function">
    <text evidence="1 4">Polyprenyl transferase; part of the gene cluster that mediates the biosynthesis of macrophorins, isoprenoid epoxycyclohexenones containing cyclized drimane moieties (PubMed:28926261). The first step of the pathway is the synthesis of 6-methylsalicylic acid (6-MSA) by the polyketide synthase macA (PubMed:28926261). 6-MSA is then converted to m-cresol by the decarboxylase macB (By similarity). The cytochrome P450 monooxygenase macC then catalyzes the oxidation of m-cresol to toluquinol (By similarity). Epoxidation of toluquinol is then performed by the short chain dehydrogenase macD, with the help of macE, and a further prenylation by macG leads to 7-deacetoxyyanuthone A (By similarity). The next step is the hydroxylation of C-22 of 7-deacetoxyyanuthone A by the cytochrome P450 monooxygenase macH to yield 22-deacetylyanuthone A (By similarity). O-Mevalon transferase macI then attaches mevalon to the hydroxyl group of 22-deacetylyanuthone A to produce yanuthone E (By similarity). The terpene cyclase macJ catalyzes the cyclization of 22-deacetylyanuthone A to macrophorin A (PubMed:28926261). MacJ is also able to catalyze cyclization of yanuthone E and 7-deacetoxyyanuthone A to their corresponding macrophorins (PubMed:28926261). The macJ products can be further modified by macH and macJ, as well as by the FAD-dependent monooxygenase macF, to produce additional macrophorins, including 4'-oxomacrophorin A, 4'-oxomacrophorin D and 4'-oxomacrophorin E (PubMed:28926261).</text>
</comment>
<comment type="cofactor">
    <cofactor evidence="2">
        <name>Mg(2+)</name>
        <dbReference type="ChEBI" id="CHEBI:18420"/>
    </cofactor>
</comment>
<comment type="pathway">
    <text evidence="4">Secondary metabolite biosynthesis; terpenoid biosynthesis.</text>
</comment>
<comment type="subcellular location">
    <subcellularLocation>
        <location evidence="3">Membrane</location>
        <topology evidence="3">Multi-pass membrane protein</topology>
    </subcellularLocation>
</comment>
<comment type="miscellaneous">
    <text evidence="4">The macrophorins cluster contains a single gene insertion (encoding for the terpene cyclase macJ) compared with the yanuthone cluster that produces the linear compound yanuthone.</text>
</comment>
<comment type="similarity">
    <text evidence="6">Belongs to the UbiA prenyltransferase family.</text>
</comment>
<dbReference type="EC" id="2.5.1.-" evidence="1"/>
<dbReference type="EMBL" id="MF989998">
    <property type="protein sequence ID" value="AVK70099.1"/>
    <property type="molecule type" value="Genomic_DNA"/>
</dbReference>
<dbReference type="EMBL" id="MH388470">
    <property type="protein sequence ID" value="QBC75449.1"/>
    <property type="molecule type" value="Genomic_DNA"/>
</dbReference>
<dbReference type="SMR" id="A0A2P1DP87"/>
<dbReference type="UniPathway" id="UPA00213"/>
<dbReference type="GO" id="GO:0005886">
    <property type="term" value="C:plasma membrane"/>
    <property type="evidence" value="ECO:0007669"/>
    <property type="project" value="TreeGrafter"/>
</dbReference>
<dbReference type="GO" id="GO:0016765">
    <property type="term" value="F:transferase activity, transferring alkyl or aryl (other than methyl) groups"/>
    <property type="evidence" value="ECO:0007669"/>
    <property type="project" value="InterPro"/>
</dbReference>
<dbReference type="GO" id="GO:0016114">
    <property type="term" value="P:terpenoid biosynthetic process"/>
    <property type="evidence" value="ECO:0007669"/>
    <property type="project" value="UniProtKB-UniPathway"/>
</dbReference>
<dbReference type="CDD" id="cd13959">
    <property type="entry name" value="PT_UbiA_COQ2"/>
    <property type="match status" value="1"/>
</dbReference>
<dbReference type="FunFam" id="1.10.357.140:FF:000008">
    <property type="entry name" value="4-hydroxybenzoate octaprenyltransferase"/>
    <property type="match status" value="1"/>
</dbReference>
<dbReference type="FunFam" id="1.20.120.1780:FF:000001">
    <property type="entry name" value="4-hydroxybenzoate octaprenyltransferase"/>
    <property type="match status" value="1"/>
</dbReference>
<dbReference type="Gene3D" id="1.10.357.140">
    <property type="entry name" value="UbiA prenyltransferase"/>
    <property type="match status" value="1"/>
</dbReference>
<dbReference type="Gene3D" id="1.20.120.1780">
    <property type="entry name" value="UbiA prenyltransferase"/>
    <property type="match status" value="1"/>
</dbReference>
<dbReference type="InterPro" id="IPR039653">
    <property type="entry name" value="Prenyltransferase"/>
</dbReference>
<dbReference type="InterPro" id="IPR000537">
    <property type="entry name" value="UbiA_prenyltransferase"/>
</dbReference>
<dbReference type="InterPro" id="IPR044878">
    <property type="entry name" value="UbiA_sf"/>
</dbReference>
<dbReference type="PANTHER" id="PTHR11048:SF28">
    <property type="entry name" value="4-HYDROXYBENZOATE POLYPRENYLTRANSFERASE, MITOCHONDRIAL"/>
    <property type="match status" value="1"/>
</dbReference>
<dbReference type="PANTHER" id="PTHR11048">
    <property type="entry name" value="PRENYLTRANSFERASES"/>
    <property type="match status" value="1"/>
</dbReference>
<dbReference type="Pfam" id="PF01040">
    <property type="entry name" value="UbiA"/>
    <property type="match status" value="1"/>
</dbReference>